<dbReference type="EMBL" id="AL136681">
    <property type="protein sequence ID" value="CAB66616.1"/>
    <property type="molecule type" value="mRNA"/>
</dbReference>
<dbReference type="EMBL" id="AK054590">
    <property type="protein sequence ID" value="BAB70768.1"/>
    <property type="molecule type" value="mRNA"/>
</dbReference>
<dbReference type="EMBL" id="AK292098">
    <property type="protein sequence ID" value="BAF84787.1"/>
    <property type="molecule type" value="mRNA"/>
</dbReference>
<dbReference type="EMBL" id="CR533487">
    <property type="protein sequence ID" value="CAG38518.1"/>
    <property type="molecule type" value="mRNA"/>
</dbReference>
<dbReference type="EMBL" id="CH471096">
    <property type="protein sequence ID" value="EAW62905.1"/>
    <property type="molecule type" value="Genomic_DNA"/>
</dbReference>
<dbReference type="EMBL" id="BC011894">
    <property type="protein sequence ID" value="AAH11894.1"/>
    <property type="molecule type" value="mRNA"/>
</dbReference>
<dbReference type="EMBL" id="BC033031">
    <property type="protein sequence ID" value="AAH33031.1"/>
    <property type="molecule type" value="mRNA"/>
</dbReference>
<dbReference type="EMBL" id="BC038100">
    <property type="protein sequence ID" value="AAH38100.1"/>
    <property type="molecule type" value="mRNA"/>
</dbReference>
<dbReference type="CCDS" id="CCDS32829.1">
    <molecule id="Q9H0R4-1"/>
</dbReference>
<dbReference type="RefSeq" id="NP_001305694.1">
    <molecule id="Q9H0R4-2"/>
    <property type="nucleotide sequence ID" value="NM_001318765.2"/>
</dbReference>
<dbReference type="RefSeq" id="NP_115500.1">
    <molecule id="Q9H0R4-1"/>
    <property type="nucleotide sequence ID" value="NM_032124.5"/>
</dbReference>
<dbReference type="RefSeq" id="XP_006722620.1">
    <property type="nucleotide sequence ID" value="XM_006722557.2"/>
</dbReference>
<dbReference type="RefSeq" id="XP_011524529.1">
    <molecule id="Q9H0R4-1"/>
    <property type="nucleotide sequence ID" value="XM_011526227.3"/>
</dbReference>
<dbReference type="RefSeq" id="XP_011524530.1">
    <molecule id="Q9H0R4-1"/>
    <property type="nucleotide sequence ID" value="XM_011526228.4"/>
</dbReference>
<dbReference type="RefSeq" id="XP_016881528.1">
    <molecule id="Q9H0R4-1"/>
    <property type="nucleotide sequence ID" value="XM_017026039.2"/>
</dbReference>
<dbReference type="RefSeq" id="XP_054175239.1">
    <molecule id="Q9H0R4-1"/>
    <property type="nucleotide sequence ID" value="XM_054319264.1"/>
</dbReference>
<dbReference type="RefSeq" id="XP_054175240.1">
    <molecule id="Q9H0R4-1"/>
    <property type="nucleotide sequence ID" value="XM_054319265.1"/>
</dbReference>
<dbReference type="RefSeq" id="XP_054175241.1">
    <molecule id="Q9H0R4-1"/>
    <property type="nucleotide sequence ID" value="XM_054319266.1"/>
</dbReference>
<dbReference type="PDB" id="3HLT">
    <property type="method" value="X-ray"/>
    <property type="resolution" value="2.30 A"/>
    <property type="chains" value="A/C=1-259"/>
</dbReference>
<dbReference type="PDBsum" id="3HLT"/>
<dbReference type="SMR" id="Q9H0R4"/>
<dbReference type="BioGRID" id="123859">
    <property type="interactions" value="17"/>
</dbReference>
<dbReference type="FunCoup" id="Q9H0R4">
    <property type="interactions" value="286"/>
</dbReference>
<dbReference type="IntAct" id="Q9H0R4">
    <property type="interactions" value="11"/>
</dbReference>
<dbReference type="STRING" id="9606.ENSP00000300605"/>
<dbReference type="DEPOD" id="HDHD2"/>
<dbReference type="GlyGen" id="Q9H0R4">
    <property type="glycosylation" value="1 site, 1 O-linked glycan (1 site)"/>
</dbReference>
<dbReference type="iPTMnet" id="Q9H0R4"/>
<dbReference type="PhosphoSitePlus" id="Q9H0R4"/>
<dbReference type="BioMuta" id="HDHD2"/>
<dbReference type="DMDM" id="74733528"/>
<dbReference type="OGP" id="Q9H0R4"/>
<dbReference type="REPRODUCTION-2DPAGE" id="IPI00783874"/>
<dbReference type="jPOST" id="Q9H0R4"/>
<dbReference type="MassIVE" id="Q9H0R4"/>
<dbReference type="PaxDb" id="9606-ENSP00000300605"/>
<dbReference type="PeptideAtlas" id="Q9H0R4"/>
<dbReference type="ProteomicsDB" id="80316">
    <molecule id="Q9H0R4-1"/>
</dbReference>
<dbReference type="ProteomicsDB" id="80317">
    <molecule id="Q9H0R4-2"/>
</dbReference>
<dbReference type="Pumba" id="Q9H0R4"/>
<dbReference type="Antibodypedia" id="22539">
    <property type="antibodies" value="263 antibodies from 20 providers"/>
</dbReference>
<dbReference type="DNASU" id="84064"/>
<dbReference type="Ensembl" id="ENST00000300605.11">
    <molecule id="Q9H0R4-1"/>
    <property type="protein sequence ID" value="ENSP00000300605.4"/>
    <property type="gene ID" value="ENSG00000167220.12"/>
</dbReference>
<dbReference type="GeneID" id="84064"/>
<dbReference type="KEGG" id="hsa:84064"/>
<dbReference type="MANE-Select" id="ENST00000300605.11">
    <property type="protein sequence ID" value="ENSP00000300605.4"/>
    <property type="RefSeq nucleotide sequence ID" value="NM_032124.5"/>
    <property type="RefSeq protein sequence ID" value="NP_115500.1"/>
</dbReference>
<dbReference type="AGR" id="HGNC:25364"/>
<dbReference type="CTD" id="84064"/>
<dbReference type="DisGeNET" id="84064"/>
<dbReference type="GeneCards" id="HDHD2"/>
<dbReference type="HGNC" id="HGNC:25364">
    <property type="gene designation" value="HDHD2"/>
</dbReference>
<dbReference type="HPA" id="ENSG00000167220">
    <property type="expression patterns" value="Low tissue specificity"/>
</dbReference>
<dbReference type="neXtProt" id="NX_Q9H0R4"/>
<dbReference type="OpenTargets" id="ENSG00000167220"/>
<dbReference type="PharmGKB" id="PA134952019"/>
<dbReference type="VEuPathDB" id="HostDB:ENSG00000167220"/>
<dbReference type="eggNOG" id="KOG3040">
    <property type="taxonomic scope" value="Eukaryota"/>
</dbReference>
<dbReference type="GeneTree" id="ENSGT00940000155805"/>
<dbReference type="HOGENOM" id="CLU_043473_4_0_1"/>
<dbReference type="InParanoid" id="Q9H0R4"/>
<dbReference type="OMA" id="RKPIESW"/>
<dbReference type="OrthoDB" id="426235at2759"/>
<dbReference type="PAN-GO" id="Q9H0R4">
    <property type="GO annotations" value="1 GO annotation based on evolutionary models"/>
</dbReference>
<dbReference type="PhylomeDB" id="Q9H0R4"/>
<dbReference type="TreeFam" id="TF314344"/>
<dbReference type="PathwayCommons" id="Q9H0R4"/>
<dbReference type="SignaLink" id="Q9H0R4"/>
<dbReference type="BioGRID-ORCS" id="84064">
    <property type="hits" value="8 hits in 1158 CRISPR screens"/>
</dbReference>
<dbReference type="ChiTaRS" id="HDHD2">
    <property type="organism name" value="human"/>
</dbReference>
<dbReference type="EvolutionaryTrace" id="Q9H0R4"/>
<dbReference type="GeneWiki" id="HDHD2"/>
<dbReference type="GenomeRNAi" id="84064"/>
<dbReference type="Pharos" id="Q9H0R4">
    <property type="development level" value="Tdark"/>
</dbReference>
<dbReference type="PRO" id="PR:Q9H0R4"/>
<dbReference type="Proteomes" id="UP000005640">
    <property type="component" value="Chromosome 18"/>
</dbReference>
<dbReference type="RNAct" id="Q9H0R4">
    <property type="molecule type" value="protein"/>
</dbReference>
<dbReference type="Bgee" id="ENSG00000167220">
    <property type="expression patterns" value="Expressed in substantia nigra and 105 other cell types or tissues"/>
</dbReference>
<dbReference type="ExpressionAtlas" id="Q9H0R4">
    <property type="expression patterns" value="baseline and differential"/>
</dbReference>
<dbReference type="GO" id="GO:0005737">
    <property type="term" value="C:cytoplasm"/>
    <property type="evidence" value="ECO:0000318"/>
    <property type="project" value="GO_Central"/>
</dbReference>
<dbReference type="GO" id="GO:0070062">
    <property type="term" value="C:extracellular exosome"/>
    <property type="evidence" value="ECO:0007005"/>
    <property type="project" value="UniProtKB"/>
</dbReference>
<dbReference type="GO" id="GO:0019899">
    <property type="term" value="F:enzyme binding"/>
    <property type="evidence" value="ECO:0000353"/>
    <property type="project" value="UniProtKB"/>
</dbReference>
<dbReference type="GO" id="GO:0046872">
    <property type="term" value="F:metal ion binding"/>
    <property type="evidence" value="ECO:0007669"/>
    <property type="project" value="UniProtKB-KW"/>
</dbReference>
<dbReference type="GO" id="GO:0016791">
    <property type="term" value="F:phosphatase activity"/>
    <property type="evidence" value="ECO:0000318"/>
    <property type="project" value="GO_Central"/>
</dbReference>
<dbReference type="CDD" id="cd07509">
    <property type="entry name" value="HAD_PPase"/>
    <property type="match status" value="1"/>
</dbReference>
<dbReference type="FunFam" id="3.40.50.1000:FF:000452">
    <property type="entry name" value="Haloacid dehalogenase-like hydrolase domain-containing protein 2"/>
    <property type="match status" value="2"/>
</dbReference>
<dbReference type="Gene3D" id="3.40.50.1000">
    <property type="entry name" value="HAD superfamily/HAD-like"/>
    <property type="match status" value="2"/>
</dbReference>
<dbReference type="InterPro" id="IPR036412">
    <property type="entry name" value="HAD-like_sf"/>
</dbReference>
<dbReference type="InterPro" id="IPR006357">
    <property type="entry name" value="HAD-SF_hydro_IIA"/>
</dbReference>
<dbReference type="InterPro" id="IPR023214">
    <property type="entry name" value="HAD_sf"/>
</dbReference>
<dbReference type="InterPro" id="IPR006355">
    <property type="entry name" value="LHPP/HDHD2"/>
</dbReference>
<dbReference type="NCBIfam" id="TIGR01460">
    <property type="entry name" value="HAD-SF-IIA"/>
    <property type="match status" value="1"/>
</dbReference>
<dbReference type="NCBIfam" id="TIGR01458">
    <property type="entry name" value="HAD-SF-IIA-hyp3"/>
    <property type="match status" value="1"/>
</dbReference>
<dbReference type="PANTHER" id="PTHR19288">
    <property type="entry name" value="4-NITROPHENYLPHOSPHATASE-RELATED"/>
    <property type="match status" value="1"/>
</dbReference>
<dbReference type="PANTHER" id="PTHR19288:SF46">
    <property type="entry name" value="HALOACID DEHALOGENASE-LIKE HYDROLASE DOMAIN-CONTAINING PROTEIN 2"/>
    <property type="match status" value="1"/>
</dbReference>
<dbReference type="Pfam" id="PF13344">
    <property type="entry name" value="Hydrolase_6"/>
    <property type="match status" value="1"/>
</dbReference>
<dbReference type="Pfam" id="PF13242">
    <property type="entry name" value="Hydrolase_like"/>
    <property type="match status" value="1"/>
</dbReference>
<dbReference type="SFLD" id="SFLDG01139">
    <property type="entry name" value="C2.A:_Pyridoxal_Phosphate_Phos"/>
    <property type="match status" value="1"/>
</dbReference>
<dbReference type="SFLD" id="SFLDS00003">
    <property type="entry name" value="Haloacid_Dehalogenase"/>
    <property type="match status" value="1"/>
</dbReference>
<dbReference type="SUPFAM" id="SSF56784">
    <property type="entry name" value="HAD-like"/>
    <property type="match status" value="1"/>
</dbReference>
<proteinExistence type="evidence at protein level"/>
<evidence type="ECO:0000250" key="1"/>
<evidence type="ECO:0000250" key="2">
    <source>
        <dbReference type="UniProtKB" id="Q3UGR5"/>
    </source>
</evidence>
<evidence type="ECO:0000255" key="3"/>
<evidence type="ECO:0000303" key="4">
    <source>
    </source>
</evidence>
<evidence type="ECO:0000303" key="5">
    <source>
    </source>
</evidence>
<evidence type="ECO:0000305" key="6"/>
<evidence type="ECO:0007829" key="7">
    <source>
        <dbReference type="PDB" id="3HLT"/>
    </source>
</evidence>
<keyword id="KW-0002">3D-structure</keyword>
<keyword id="KW-0025">Alternative splicing</keyword>
<keyword id="KW-0175">Coiled coil</keyword>
<keyword id="KW-0903">Direct protein sequencing</keyword>
<keyword id="KW-0460">Magnesium</keyword>
<keyword id="KW-0479">Metal-binding</keyword>
<keyword id="KW-1267">Proteomics identification</keyword>
<keyword id="KW-1185">Reference proteome</keyword>
<organism>
    <name type="scientific">Homo sapiens</name>
    <name type="common">Human</name>
    <dbReference type="NCBI Taxonomy" id="9606"/>
    <lineage>
        <taxon>Eukaryota</taxon>
        <taxon>Metazoa</taxon>
        <taxon>Chordata</taxon>
        <taxon>Craniata</taxon>
        <taxon>Vertebrata</taxon>
        <taxon>Euteleostomi</taxon>
        <taxon>Mammalia</taxon>
        <taxon>Eutheria</taxon>
        <taxon>Euarchontoglires</taxon>
        <taxon>Primates</taxon>
        <taxon>Haplorrhini</taxon>
        <taxon>Catarrhini</taxon>
        <taxon>Hominidae</taxon>
        <taxon>Homo</taxon>
    </lineage>
</organism>
<gene>
    <name type="primary">HDHD2</name>
</gene>
<reference key="1">
    <citation type="journal article" date="2001" name="Genome Res.">
        <title>Towards a catalog of human genes and proteins: sequencing and analysis of 500 novel complete protein coding human cDNAs.</title>
        <authorList>
            <person name="Wiemann S."/>
            <person name="Weil B."/>
            <person name="Wellenreuther R."/>
            <person name="Gassenhuber J."/>
            <person name="Glassl S."/>
            <person name="Ansorge W."/>
            <person name="Boecher M."/>
            <person name="Bloecker H."/>
            <person name="Bauersachs S."/>
            <person name="Blum H."/>
            <person name="Lauber J."/>
            <person name="Duesterhoeft A."/>
            <person name="Beyer A."/>
            <person name="Koehrer K."/>
            <person name="Strack N."/>
            <person name="Mewes H.-W."/>
            <person name="Ottenwaelder B."/>
            <person name="Obermaier B."/>
            <person name="Tampe J."/>
            <person name="Heubner D."/>
            <person name="Wambutt R."/>
            <person name="Korn B."/>
            <person name="Klein M."/>
            <person name="Poustka A."/>
        </authorList>
    </citation>
    <scope>NUCLEOTIDE SEQUENCE [LARGE SCALE MRNA] (ISOFORM 1)</scope>
    <source>
        <tissue>Brain</tissue>
    </source>
</reference>
<reference key="2">
    <citation type="journal article" date="2004" name="Nat. Genet.">
        <title>Complete sequencing and characterization of 21,243 full-length human cDNAs.</title>
        <authorList>
            <person name="Ota T."/>
            <person name="Suzuki Y."/>
            <person name="Nishikawa T."/>
            <person name="Otsuki T."/>
            <person name="Sugiyama T."/>
            <person name="Irie R."/>
            <person name="Wakamatsu A."/>
            <person name="Hayashi K."/>
            <person name="Sato H."/>
            <person name="Nagai K."/>
            <person name="Kimura K."/>
            <person name="Makita H."/>
            <person name="Sekine M."/>
            <person name="Obayashi M."/>
            <person name="Nishi T."/>
            <person name="Shibahara T."/>
            <person name="Tanaka T."/>
            <person name="Ishii S."/>
            <person name="Yamamoto J."/>
            <person name="Saito K."/>
            <person name="Kawai Y."/>
            <person name="Isono Y."/>
            <person name="Nakamura Y."/>
            <person name="Nagahari K."/>
            <person name="Murakami K."/>
            <person name="Yasuda T."/>
            <person name="Iwayanagi T."/>
            <person name="Wagatsuma M."/>
            <person name="Shiratori A."/>
            <person name="Sudo H."/>
            <person name="Hosoiri T."/>
            <person name="Kaku Y."/>
            <person name="Kodaira H."/>
            <person name="Kondo H."/>
            <person name="Sugawara M."/>
            <person name="Takahashi M."/>
            <person name="Kanda K."/>
            <person name="Yokoi T."/>
            <person name="Furuya T."/>
            <person name="Kikkawa E."/>
            <person name="Omura Y."/>
            <person name="Abe K."/>
            <person name="Kamihara K."/>
            <person name="Katsuta N."/>
            <person name="Sato K."/>
            <person name="Tanikawa M."/>
            <person name="Yamazaki M."/>
            <person name="Ninomiya K."/>
            <person name="Ishibashi T."/>
            <person name="Yamashita H."/>
            <person name="Murakawa K."/>
            <person name="Fujimori K."/>
            <person name="Tanai H."/>
            <person name="Kimata M."/>
            <person name="Watanabe M."/>
            <person name="Hiraoka S."/>
            <person name="Chiba Y."/>
            <person name="Ishida S."/>
            <person name="Ono Y."/>
            <person name="Takiguchi S."/>
            <person name="Watanabe S."/>
            <person name="Yosida M."/>
            <person name="Hotuta T."/>
            <person name="Kusano J."/>
            <person name="Kanehori K."/>
            <person name="Takahashi-Fujii A."/>
            <person name="Hara H."/>
            <person name="Tanase T.-O."/>
            <person name="Nomura Y."/>
            <person name="Togiya S."/>
            <person name="Komai F."/>
            <person name="Hara R."/>
            <person name="Takeuchi K."/>
            <person name="Arita M."/>
            <person name="Imose N."/>
            <person name="Musashino K."/>
            <person name="Yuuki H."/>
            <person name="Oshima A."/>
            <person name="Sasaki N."/>
            <person name="Aotsuka S."/>
            <person name="Yoshikawa Y."/>
            <person name="Matsunawa H."/>
            <person name="Ichihara T."/>
            <person name="Shiohata N."/>
            <person name="Sano S."/>
            <person name="Moriya S."/>
            <person name="Momiyama H."/>
            <person name="Satoh N."/>
            <person name="Takami S."/>
            <person name="Terashima Y."/>
            <person name="Suzuki O."/>
            <person name="Nakagawa S."/>
            <person name="Senoh A."/>
            <person name="Mizoguchi H."/>
            <person name="Goto Y."/>
            <person name="Shimizu F."/>
            <person name="Wakebe H."/>
            <person name="Hishigaki H."/>
            <person name="Watanabe T."/>
            <person name="Sugiyama A."/>
            <person name="Takemoto M."/>
            <person name="Kawakami B."/>
            <person name="Yamazaki M."/>
            <person name="Watanabe K."/>
            <person name="Kumagai A."/>
            <person name="Itakura S."/>
            <person name="Fukuzumi Y."/>
            <person name="Fujimori Y."/>
            <person name="Komiyama M."/>
            <person name="Tashiro H."/>
            <person name="Tanigami A."/>
            <person name="Fujiwara T."/>
            <person name="Ono T."/>
            <person name="Yamada K."/>
            <person name="Fujii Y."/>
            <person name="Ozaki K."/>
            <person name="Hirao M."/>
            <person name="Ohmori Y."/>
            <person name="Kawabata A."/>
            <person name="Hikiji T."/>
            <person name="Kobatake N."/>
            <person name="Inagaki H."/>
            <person name="Ikema Y."/>
            <person name="Okamoto S."/>
            <person name="Okitani R."/>
            <person name="Kawakami T."/>
            <person name="Noguchi S."/>
            <person name="Itoh T."/>
            <person name="Shigeta K."/>
            <person name="Senba T."/>
            <person name="Matsumura K."/>
            <person name="Nakajima Y."/>
            <person name="Mizuno T."/>
            <person name="Morinaga M."/>
            <person name="Sasaki M."/>
            <person name="Togashi T."/>
            <person name="Oyama M."/>
            <person name="Hata H."/>
            <person name="Watanabe M."/>
            <person name="Komatsu T."/>
            <person name="Mizushima-Sugano J."/>
            <person name="Satoh T."/>
            <person name="Shirai Y."/>
            <person name="Takahashi Y."/>
            <person name="Nakagawa K."/>
            <person name="Okumura K."/>
            <person name="Nagase T."/>
            <person name="Nomura N."/>
            <person name="Kikuchi H."/>
            <person name="Masuho Y."/>
            <person name="Yamashita R."/>
            <person name="Nakai K."/>
            <person name="Yada T."/>
            <person name="Nakamura Y."/>
            <person name="Ohara O."/>
            <person name="Isogai T."/>
            <person name="Sugano S."/>
        </authorList>
    </citation>
    <scope>NUCLEOTIDE SEQUENCE [LARGE SCALE MRNA] (ISOFORMS 1 AND 2)</scope>
    <source>
        <tissue>Neuroblastoma</tissue>
        <tissue>Synovium</tissue>
    </source>
</reference>
<reference key="3">
    <citation type="submission" date="2004-06" db="EMBL/GenBank/DDBJ databases">
        <title>Cloning of human full open reading frames in Gateway(TM) system entry vector (pDONR201).</title>
        <authorList>
            <person name="Ebert L."/>
            <person name="Schick M."/>
            <person name="Neubert P."/>
            <person name="Schatten R."/>
            <person name="Henze S."/>
            <person name="Korn B."/>
        </authorList>
    </citation>
    <scope>NUCLEOTIDE SEQUENCE [LARGE SCALE MRNA] (ISOFORM 1)</scope>
</reference>
<reference key="4">
    <citation type="submission" date="2005-07" db="EMBL/GenBank/DDBJ databases">
        <authorList>
            <person name="Mural R.J."/>
            <person name="Istrail S."/>
            <person name="Sutton G.G."/>
            <person name="Florea L."/>
            <person name="Halpern A.L."/>
            <person name="Mobarry C.M."/>
            <person name="Lippert R."/>
            <person name="Walenz B."/>
            <person name="Shatkay H."/>
            <person name="Dew I."/>
            <person name="Miller J.R."/>
            <person name="Flanigan M.J."/>
            <person name="Edwards N.J."/>
            <person name="Bolanos R."/>
            <person name="Fasulo D."/>
            <person name="Halldorsson B.V."/>
            <person name="Hannenhalli S."/>
            <person name="Turner R."/>
            <person name="Yooseph S."/>
            <person name="Lu F."/>
            <person name="Nusskern D.R."/>
            <person name="Shue B.C."/>
            <person name="Zheng X.H."/>
            <person name="Zhong F."/>
            <person name="Delcher A.L."/>
            <person name="Huson D.H."/>
            <person name="Kravitz S.A."/>
            <person name="Mouchard L."/>
            <person name="Reinert K."/>
            <person name="Remington K.A."/>
            <person name="Clark A.G."/>
            <person name="Waterman M.S."/>
            <person name="Eichler E.E."/>
            <person name="Adams M.D."/>
            <person name="Hunkapiller M.W."/>
            <person name="Myers E.W."/>
            <person name="Venter J.C."/>
        </authorList>
    </citation>
    <scope>NUCLEOTIDE SEQUENCE [LARGE SCALE GENOMIC DNA]</scope>
</reference>
<reference key="5">
    <citation type="journal article" date="2004" name="Genome Res.">
        <title>The status, quality, and expansion of the NIH full-length cDNA project: the Mammalian Gene Collection (MGC).</title>
        <authorList>
            <consortium name="The MGC Project Team"/>
        </authorList>
    </citation>
    <scope>NUCLEOTIDE SEQUENCE [LARGE SCALE MRNA] (ISOFORMS 1 AND 2)</scope>
    <source>
        <tissue>Brain</tissue>
        <tissue>Lung carcinoma</tissue>
        <tissue>Testis</tissue>
    </source>
</reference>
<reference key="6">
    <citation type="submission" date="2008-12" db="UniProtKB">
        <authorList>
            <person name="Lubec G."/>
            <person name="Chen W.-Q."/>
            <person name="Sun Y."/>
        </authorList>
    </citation>
    <scope>PROTEIN SEQUENCE OF 153-173</scope>
    <scope>IDENTIFICATION BY MASS SPECTROMETRY</scope>
    <source>
        <tissue>Fetal brain cortex</tissue>
    </source>
</reference>
<reference key="7">
    <citation type="submission" date="2009-07" db="PDB data bank">
        <title>The crystal structure of human haloacid dehalogenase-like hydrolase domain containing 2 (HDHD2).</title>
        <authorList>
            <consortium name="Structural genomics consortium (SGC)"/>
        </authorList>
    </citation>
    <scope>X-RAY CRYSTALLOGRAPHY (2.3 ANGSTROMS)</scope>
</reference>
<feature type="chain" id="PRO_0000287203" description="Haloacid dehalogenase-like hydrolase domain-containing protein 2">
    <location>
        <begin position="1"/>
        <end position="259"/>
    </location>
</feature>
<feature type="coiled-coil region" evidence="3">
    <location>
        <begin position="47"/>
        <end position="71"/>
    </location>
</feature>
<feature type="binding site" evidence="1">
    <location>
        <begin position="13"/>
        <end position="15"/>
    </location>
    <ligand>
        <name>substrate</name>
    </ligand>
</feature>
<feature type="binding site" evidence="1">
    <location>
        <position position="13"/>
    </location>
    <ligand>
        <name>Mg(2+)</name>
        <dbReference type="ChEBI" id="CHEBI:18420"/>
    </ligand>
</feature>
<feature type="binding site" evidence="1">
    <location>
        <position position="15"/>
    </location>
    <ligand>
        <name>Mg(2+)</name>
        <dbReference type="ChEBI" id="CHEBI:18420"/>
    </ligand>
</feature>
<feature type="binding site" evidence="1">
    <location>
        <begin position="46"/>
        <end position="47"/>
    </location>
    <ligand>
        <name>substrate</name>
    </ligand>
</feature>
<feature type="binding site" evidence="1">
    <location>
        <position position="179"/>
    </location>
    <ligand>
        <name>substrate</name>
    </ligand>
</feature>
<feature type="binding site" evidence="1">
    <location>
        <position position="204"/>
    </location>
    <ligand>
        <name>Mg(2+)</name>
        <dbReference type="ChEBI" id="CHEBI:18420"/>
    </ligand>
</feature>
<feature type="modified residue" description="N6-succinyllysine" evidence="2">
    <location>
        <position position="50"/>
    </location>
</feature>
<feature type="splice variant" id="VSP_025373" description="In isoform 2." evidence="4 5">
    <location>
        <begin position="1"/>
        <end position="90"/>
    </location>
</feature>
<feature type="sequence variant" id="VAR_032289" description="In dbSNP:rs7230131.">
    <original>R</original>
    <variation>Q</variation>
    <location>
        <position position="85"/>
    </location>
</feature>
<feature type="strand" evidence="7">
    <location>
        <begin position="9"/>
        <end position="13"/>
    </location>
</feature>
<feature type="turn" evidence="7">
    <location>
        <begin position="15"/>
        <end position="17"/>
    </location>
</feature>
<feature type="strand" evidence="7">
    <location>
        <begin position="18"/>
        <end position="24"/>
    </location>
</feature>
<feature type="helix" evidence="7">
    <location>
        <begin position="28"/>
        <end position="37"/>
    </location>
</feature>
<feature type="strand" evidence="7">
    <location>
        <begin position="41"/>
        <end position="46"/>
    </location>
</feature>
<feature type="helix" evidence="7">
    <location>
        <begin position="53"/>
        <end position="62"/>
    </location>
</feature>
<feature type="helix" evidence="7">
    <location>
        <begin position="69"/>
        <end position="71"/>
    </location>
</feature>
<feature type="strand" evidence="7">
    <location>
        <begin position="72"/>
        <end position="74"/>
    </location>
</feature>
<feature type="helix" evidence="7">
    <location>
        <begin position="75"/>
        <end position="86"/>
    </location>
</feature>
<feature type="strand" evidence="7">
    <location>
        <begin position="90"/>
        <end position="94"/>
    </location>
</feature>
<feature type="helix" evidence="7">
    <location>
        <begin position="96"/>
        <end position="102"/>
    </location>
</feature>
<feature type="strand" evidence="7">
    <location>
        <begin position="112"/>
        <end position="115"/>
    </location>
</feature>
<feature type="turn" evidence="7">
    <location>
        <begin position="119"/>
        <end position="121"/>
    </location>
</feature>
<feature type="helix" evidence="7">
    <location>
        <begin position="124"/>
        <end position="135"/>
    </location>
</feature>
<feature type="strand" evidence="7">
    <location>
        <begin position="140"/>
        <end position="143"/>
    </location>
</feature>
<feature type="strand" evidence="7">
    <location>
        <begin position="148"/>
        <end position="151"/>
    </location>
</feature>
<feature type="strand" evidence="7">
    <location>
        <begin position="154"/>
        <end position="157"/>
    </location>
</feature>
<feature type="helix" evidence="7">
    <location>
        <begin position="160"/>
        <end position="170"/>
    </location>
</feature>
<feature type="helix" evidence="7">
    <location>
        <begin position="182"/>
        <end position="189"/>
    </location>
</feature>
<feature type="turn" evidence="7">
    <location>
        <begin position="190"/>
        <end position="193"/>
    </location>
</feature>
<feature type="helix" evidence="7">
    <location>
        <begin position="196"/>
        <end position="198"/>
    </location>
</feature>
<feature type="strand" evidence="7">
    <location>
        <begin position="199"/>
        <end position="204"/>
    </location>
</feature>
<feature type="turn" evidence="7">
    <location>
        <begin position="206"/>
        <end position="209"/>
    </location>
</feature>
<feature type="helix" evidence="7">
    <location>
        <begin position="210"/>
        <end position="214"/>
    </location>
</feature>
<feature type="turn" evidence="7">
    <location>
        <begin position="215"/>
        <end position="217"/>
    </location>
</feature>
<feature type="strand" evidence="7">
    <location>
        <begin position="219"/>
        <end position="225"/>
    </location>
</feature>
<feature type="helix" evidence="7">
    <location>
        <begin position="232"/>
        <end position="235"/>
    </location>
</feature>
<feature type="strand" evidence="7">
    <location>
        <begin position="236"/>
        <end position="238"/>
    </location>
</feature>
<feature type="strand" evidence="7">
    <location>
        <begin position="241"/>
        <end position="246"/>
    </location>
</feature>
<feature type="helix" evidence="7">
    <location>
        <begin position="247"/>
        <end position="257"/>
    </location>
</feature>
<name>HDHD2_HUMAN</name>
<protein>
    <recommendedName>
        <fullName>Haloacid dehalogenase-like hydrolase domain-containing protein 2</fullName>
    </recommendedName>
</protein>
<comment type="cofactor">
    <cofactor evidence="1">
        <name>Mg(2+)</name>
        <dbReference type="ChEBI" id="CHEBI:18420"/>
    </cofactor>
    <text evidence="1">Binds 1 Mg(2+) ion per subunit.</text>
</comment>
<comment type="interaction">
    <interactant intactId="EBI-10304657">
        <id>Q9H0R4</id>
    </interactant>
    <interactant intactId="EBI-1059330">
        <id>Q9H008</id>
        <label>LHPP</label>
    </interactant>
    <organismsDiffer>false</organismsDiffer>
    <experiments>2</experiments>
</comment>
<comment type="interaction">
    <interactant intactId="EBI-10304657">
        <id>Q9H0R4</id>
    </interactant>
    <interactant intactId="EBI-748397">
        <id>P50222</id>
        <label>MEOX2</label>
    </interactant>
    <organismsDiffer>false</organismsDiffer>
    <experiments>3</experiments>
</comment>
<comment type="alternative products">
    <event type="alternative splicing"/>
    <isoform>
        <id>Q9H0R4-1</id>
        <name>1</name>
        <sequence type="displayed"/>
    </isoform>
    <isoform>
        <id>Q9H0R4-2</id>
        <name>2</name>
        <sequence type="described" ref="VSP_025373"/>
    </isoform>
</comment>
<comment type="similarity">
    <text evidence="6">Belongs to the HAD-like hydrolase superfamily.</text>
</comment>
<accession>Q9H0R4</accession>
<accession>A8K7T3</accession>
<accession>Q96NV4</accession>
<sequence>MAACRALKAVLVDLSGTLHIEDAAVPGAQEALKRLRGASVIIRFVTNTTKESKQDLLERLRKLEFDISEDEIFTSLTAARSLLERKQVRPMLLVDDRALPDFKGIQTSDPNAVVMGLAPEHFHYQILNQAFRLLLDGAPLIAIHKARYYKRKDGLALGPGPFVTALEYATDTKATVVGKPEKTFFLEALRGTGCEPEEAVMIGDDCRDDVGGAQDVGMLGILVKTGKYRASDEEKINPPPYLTCESFPHAVDHILQHLL</sequence>